<dbReference type="EMBL" id="CM000131">
    <property type="protein sequence ID" value="EAY99887.1"/>
    <property type="status" value="ALT_INIT"/>
    <property type="molecule type" value="Genomic_DNA"/>
</dbReference>
<dbReference type="SMR" id="A2Y9X7"/>
<dbReference type="STRING" id="39946.A2Y9X7"/>
<dbReference type="MEROPS" id="T01.973"/>
<dbReference type="EnsemblPlants" id="OsGoSa_06g0005430.01">
    <property type="protein sequence ID" value="OsGoSa_06g0005430.01"/>
    <property type="gene ID" value="OsGoSa_06g0005430"/>
</dbReference>
<dbReference type="EnsemblPlants" id="OsIR64_06g0005250.01">
    <property type="protein sequence ID" value="OsIR64_06g0005250.01"/>
    <property type="gene ID" value="OsIR64_06g0005250"/>
</dbReference>
<dbReference type="EnsemblPlants" id="OsKYG_06g0005420.01">
    <property type="protein sequence ID" value="OsKYG_06g0005420.01"/>
    <property type="gene ID" value="OsKYG_06g0005420"/>
</dbReference>
<dbReference type="EnsemblPlants" id="OsLaMu_06g0005280.01">
    <property type="protein sequence ID" value="OsLaMu_06g0005280.01"/>
    <property type="gene ID" value="OsLaMu_06g0005280"/>
</dbReference>
<dbReference type="EnsemblPlants" id="OsLima_06g0005580.01">
    <property type="protein sequence ID" value="OsLima_06g0005580.01"/>
    <property type="gene ID" value="OsLima_06g0005580"/>
</dbReference>
<dbReference type="EnsemblPlants" id="OsMH63_06G005270_01">
    <property type="protein sequence ID" value="OsMH63_06G005270_01"/>
    <property type="gene ID" value="OsMH63_06G005270"/>
</dbReference>
<dbReference type="EnsemblPlants" id="OsPr106_06g0005390.01">
    <property type="protein sequence ID" value="OsPr106_06g0005390.01"/>
    <property type="gene ID" value="OsPr106_06g0005390"/>
</dbReference>
<dbReference type="EnsemblPlants" id="OsZS97_06G005370_01">
    <property type="protein sequence ID" value="OsZS97_06G005370_01"/>
    <property type="gene ID" value="OsZS97_06G005370"/>
</dbReference>
<dbReference type="Gramene" id="OsGoSa_06g0005430.01">
    <property type="protein sequence ID" value="OsGoSa_06g0005430.01"/>
    <property type="gene ID" value="OsGoSa_06g0005430"/>
</dbReference>
<dbReference type="Gramene" id="OsIR64_06g0005250.01">
    <property type="protein sequence ID" value="OsIR64_06g0005250.01"/>
    <property type="gene ID" value="OsIR64_06g0005250"/>
</dbReference>
<dbReference type="Gramene" id="OsKYG_06g0005420.01">
    <property type="protein sequence ID" value="OsKYG_06g0005420.01"/>
    <property type="gene ID" value="OsKYG_06g0005420"/>
</dbReference>
<dbReference type="Gramene" id="OsLaMu_06g0005280.01">
    <property type="protein sequence ID" value="OsLaMu_06g0005280.01"/>
    <property type="gene ID" value="OsLaMu_06g0005280"/>
</dbReference>
<dbReference type="Gramene" id="OsLima_06g0005580.01">
    <property type="protein sequence ID" value="OsLima_06g0005580.01"/>
    <property type="gene ID" value="OsLima_06g0005580"/>
</dbReference>
<dbReference type="Gramene" id="OsMH63_06G005270_01">
    <property type="protein sequence ID" value="OsMH63_06G005270_01"/>
    <property type="gene ID" value="OsMH63_06G005270"/>
</dbReference>
<dbReference type="Gramene" id="OsPr106_06g0005390.01">
    <property type="protein sequence ID" value="OsPr106_06g0005390.01"/>
    <property type="gene ID" value="OsPr106_06g0005390"/>
</dbReference>
<dbReference type="Gramene" id="OsZS97_06G005370_01">
    <property type="protein sequence ID" value="OsZS97_06G005370_01"/>
    <property type="gene ID" value="OsZS97_06G005370"/>
</dbReference>
<dbReference type="OrthoDB" id="431557at2759"/>
<dbReference type="Proteomes" id="UP000007015">
    <property type="component" value="Chromosome 6"/>
</dbReference>
<dbReference type="GO" id="GO:0005737">
    <property type="term" value="C:cytoplasm"/>
    <property type="evidence" value="ECO:0007669"/>
    <property type="project" value="UniProtKB-SubCell"/>
</dbReference>
<dbReference type="GO" id="GO:0005634">
    <property type="term" value="C:nucleus"/>
    <property type="evidence" value="ECO:0007669"/>
    <property type="project" value="UniProtKB-SubCell"/>
</dbReference>
<dbReference type="GO" id="GO:0019773">
    <property type="term" value="C:proteasome core complex, alpha-subunit complex"/>
    <property type="evidence" value="ECO:0000250"/>
    <property type="project" value="UniProtKB"/>
</dbReference>
<dbReference type="GO" id="GO:0006511">
    <property type="term" value="P:ubiquitin-dependent protein catabolic process"/>
    <property type="evidence" value="ECO:0007669"/>
    <property type="project" value="InterPro"/>
</dbReference>
<dbReference type="CDD" id="cd03752">
    <property type="entry name" value="proteasome_alpha_type_4"/>
    <property type="match status" value="1"/>
</dbReference>
<dbReference type="FunFam" id="3.60.20.10:FF:000031">
    <property type="entry name" value="Proteasome subunit alpha type"/>
    <property type="match status" value="1"/>
</dbReference>
<dbReference type="Gene3D" id="3.60.20.10">
    <property type="entry name" value="Glutamine Phosphoribosylpyrophosphate, subunit 1, domain 1"/>
    <property type="match status" value="1"/>
</dbReference>
<dbReference type="InterPro" id="IPR029055">
    <property type="entry name" value="Ntn_hydrolases_N"/>
</dbReference>
<dbReference type="InterPro" id="IPR050115">
    <property type="entry name" value="Proteasome_alpha"/>
</dbReference>
<dbReference type="InterPro" id="IPR023332">
    <property type="entry name" value="Proteasome_alpha-type"/>
</dbReference>
<dbReference type="InterPro" id="IPR000426">
    <property type="entry name" value="Proteasome_asu_N"/>
</dbReference>
<dbReference type="InterPro" id="IPR001353">
    <property type="entry name" value="Proteasome_sua/b"/>
</dbReference>
<dbReference type="NCBIfam" id="NF003075">
    <property type="entry name" value="PRK03996.1"/>
    <property type="match status" value="1"/>
</dbReference>
<dbReference type="PANTHER" id="PTHR11599">
    <property type="entry name" value="PROTEASOME SUBUNIT ALPHA/BETA"/>
    <property type="match status" value="1"/>
</dbReference>
<dbReference type="Pfam" id="PF00227">
    <property type="entry name" value="Proteasome"/>
    <property type="match status" value="1"/>
</dbReference>
<dbReference type="Pfam" id="PF10584">
    <property type="entry name" value="Proteasome_A_N"/>
    <property type="match status" value="1"/>
</dbReference>
<dbReference type="SMART" id="SM00948">
    <property type="entry name" value="Proteasome_A_N"/>
    <property type="match status" value="1"/>
</dbReference>
<dbReference type="SUPFAM" id="SSF56235">
    <property type="entry name" value="N-terminal nucleophile aminohydrolases (Ntn hydrolases)"/>
    <property type="match status" value="1"/>
</dbReference>
<dbReference type="PROSITE" id="PS00388">
    <property type="entry name" value="PROTEASOME_ALPHA_1"/>
    <property type="match status" value="1"/>
</dbReference>
<dbReference type="PROSITE" id="PS51475">
    <property type="entry name" value="PROTEASOME_ALPHA_2"/>
    <property type="match status" value="1"/>
</dbReference>
<accession>A2Y9X7</accession>
<reference key="1">
    <citation type="journal article" date="2005" name="PLoS Biol.">
        <title>The genomes of Oryza sativa: a history of duplications.</title>
        <authorList>
            <person name="Yu J."/>
            <person name="Wang J."/>
            <person name="Lin W."/>
            <person name="Li S."/>
            <person name="Li H."/>
            <person name="Zhou J."/>
            <person name="Ni P."/>
            <person name="Dong W."/>
            <person name="Hu S."/>
            <person name="Zeng C."/>
            <person name="Zhang J."/>
            <person name="Zhang Y."/>
            <person name="Li R."/>
            <person name="Xu Z."/>
            <person name="Li S."/>
            <person name="Li X."/>
            <person name="Zheng H."/>
            <person name="Cong L."/>
            <person name="Lin L."/>
            <person name="Yin J."/>
            <person name="Geng J."/>
            <person name="Li G."/>
            <person name="Shi J."/>
            <person name="Liu J."/>
            <person name="Lv H."/>
            <person name="Li J."/>
            <person name="Wang J."/>
            <person name="Deng Y."/>
            <person name="Ran L."/>
            <person name="Shi X."/>
            <person name="Wang X."/>
            <person name="Wu Q."/>
            <person name="Li C."/>
            <person name="Ren X."/>
            <person name="Wang J."/>
            <person name="Wang X."/>
            <person name="Li D."/>
            <person name="Liu D."/>
            <person name="Zhang X."/>
            <person name="Ji Z."/>
            <person name="Zhao W."/>
            <person name="Sun Y."/>
            <person name="Zhang Z."/>
            <person name="Bao J."/>
            <person name="Han Y."/>
            <person name="Dong L."/>
            <person name="Ji J."/>
            <person name="Chen P."/>
            <person name="Wu S."/>
            <person name="Liu J."/>
            <person name="Xiao Y."/>
            <person name="Bu D."/>
            <person name="Tan J."/>
            <person name="Yang L."/>
            <person name="Ye C."/>
            <person name="Zhang J."/>
            <person name="Xu J."/>
            <person name="Zhou Y."/>
            <person name="Yu Y."/>
            <person name="Zhang B."/>
            <person name="Zhuang S."/>
            <person name="Wei H."/>
            <person name="Liu B."/>
            <person name="Lei M."/>
            <person name="Yu H."/>
            <person name="Li Y."/>
            <person name="Xu H."/>
            <person name="Wei S."/>
            <person name="He X."/>
            <person name="Fang L."/>
            <person name="Zhang Z."/>
            <person name="Zhang Y."/>
            <person name="Huang X."/>
            <person name="Su Z."/>
            <person name="Tong W."/>
            <person name="Li J."/>
            <person name="Tong Z."/>
            <person name="Li S."/>
            <person name="Ye J."/>
            <person name="Wang L."/>
            <person name="Fang L."/>
            <person name="Lei T."/>
            <person name="Chen C.-S."/>
            <person name="Chen H.-C."/>
            <person name="Xu Z."/>
            <person name="Li H."/>
            <person name="Huang H."/>
            <person name="Zhang F."/>
            <person name="Xu H."/>
            <person name="Li N."/>
            <person name="Zhao C."/>
            <person name="Li S."/>
            <person name="Dong L."/>
            <person name="Huang Y."/>
            <person name="Li L."/>
            <person name="Xi Y."/>
            <person name="Qi Q."/>
            <person name="Li W."/>
            <person name="Zhang B."/>
            <person name="Hu W."/>
            <person name="Zhang Y."/>
            <person name="Tian X."/>
            <person name="Jiao Y."/>
            <person name="Liang X."/>
            <person name="Jin J."/>
            <person name="Gao L."/>
            <person name="Zheng W."/>
            <person name="Hao B."/>
            <person name="Liu S.-M."/>
            <person name="Wang W."/>
            <person name="Yuan L."/>
            <person name="Cao M."/>
            <person name="McDermott J."/>
            <person name="Samudrala R."/>
            <person name="Wang J."/>
            <person name="Wong G.K.-S."/>
            <person name="Yang H."/>
        </authorList>
    </citation>
    <scope>NUCLEOTIDE SEQUENCE [LARGE SCALE GENOMIC DNA]</scope>
    <source>
        <strain>cv. 93-11</strain>
    </source>
</reference>
<reference key="2">
    <citation type="submission" date="2008-11" db="UniProtKB">
        <title>Interactive genomics and proteomics of plant growth promoting rhizobacteria (PGPR) for the management of major pests and diseases in rice.</title>
        <authorList>
            <person name="Saveetha K."/>
            <person name="Samiyappan R."/>
            <person name="Raveendran M."/>
            <person name="Balasubramanian P."/>
        </authorList>
    </citation>
    <scope>IDENTIFICATION BY MASS SPECTROMETRY</scope>
    <source>
        <strain>cv. CO43</strain>
        <tissue>Leaf</tissue>
    </source>
</reference>
<gene>
    <name type="ORF">OsI_021120</name>
</gene>
<name>PSA4A_ORYSI</name>
<organism>
    <name type="scientific">Oryza sativa subsp. indica</name>
    <name type="common">Rice</name>
    <dbReference type="NCBI Taxonomy" id="39946"/>
    <lineage>
        <taxon>Eukaryota</taxon>
        <taxon>Viridiplantae</taxon>
        <taxon>Streptophyta</taxon>
        <taxon>Embryophyta</taxon>
        <taxon>Tracheophyta</taxon>
        <taxon>Spermatophyta</taxon>
        <taxon>Magnoliopsida</taxon>
        <taxon>Liliopsida</taxon>
        <taxon>Poales</taxon>
        <taxon>Poaceae</taxon>
        <taxon>BOP clade</taxon>
        <taxon>Oryzoideae</taxon>
        <taxon>Oryzeae</taxon>
        <taxon>Oryzinae</taxon>
        <taxon>Oryza</taxon>
        <taxon>Oryza sativa</taxon>
    </lineage>
</organism>
<keyword id="KW-0963">Cytoplasm</keyword>
<keyword id="KW-0539">Nucleus</keyword>
<keyword id="KW-0647">Proteasome</keyword>
<keyword id="KW-1185">Reference proteome</keyword>
<proteinExistence type="evidence at protein level"/>
<feature type="chain" id="PRO_0000361768" description="Proteasome subunit alpha type-4-1">
    <location>
        <begin position="1"/>
        <end position="250"/>
    </location>
</feature>
<protein>
    <recommendedName>
        <fullName>Proteasome subunit alpha type-4-1</fullName>
    </recommendedName>
    <alternativeName>
        <fullName>20S proteasome alpha subunit C</fullName>
    </alternativeName>
    <alternativeName>
        <fullName>20S proteasome subunit alpha-3</fullName>
    </alternativeName>
</protein>
<sequence length="250" mass="27044">MSRRYDSRTTIFSPEGRLYQVEYAMEAIGNAGSALGVLAADGVVLVGEKKVTSKLLQTSRSAEKMYKIDSHLACAVAGIMSDANILLNTARLHAQRYALSYQEPIPVEQLVQSLCDTKQGYTQFGGLRPFGVSFLFAGWDKHHGFQLYMSDPSGNYSGWKAAAVGANSQAAQSMLKQDYRDGMTREEAVALALKVLSKTMDSTSLTAEKLELAEVFLQPGTGEVQYQVCSPEAMGKLLAKAGLSQPAPEA</sequence>
<comment type="function">
    <text>The proteasome is a multicatalytic proteinase complex which is characterized by its ability to cleave peptides with Arg, Phe, Tyr, Leu, and Glu adjacent to the leaving group at neutral or slightly basic pH. The proteasome has an ATP-dependent proteolytic activity.</text>
</comment>
<comment type="subunit">
    <text evidence="1">The 26S proteasome consists of a 20S proteasome core and two 19S regulatory subunits. The 20S proteasome core is composed of 28 subunits that are arranged in four stacked rings, resulting in a barrel-shaped structure. The two end rings are each formed by seven alpha subunits, and the two central rings are each formed by seven beta subunits. The catalytic chamber with the active sites is on the inside of the barrel (By similarity).</text>
</comment>
<comment type="subcellular location">
    <subcellularLocation>
        <location evidence="1">Cytoplasm</location>
    </subcellularLocation>
    <subcellularLocation>
        <location evidence="1">Nucleus</location>
    </subcellularLocation>
</comment>
<comment type="similarity">
    <text evidence="2">Belongs to the peptidase T1A family.</text>
</comment>
<comment type="sequence caution" evidence="3">
    <conflict type="erroneous initiation">
        <sequence resource="EMBL-CDS" id="EAY99887"/>
    </conflict>
</comment>
<evidence type="ECO:0000250" key="1"/>
<evidence type="ECO:0000255" key="2">
    <source>
        <dbReference type="PROSITE-ProRule" id="PRU00808"/>
    </source>
</evidence>
<evidence type="ECO:0000305" key="3"/>